<comment type="function">
    <text evidence="4">Has aminomutase and, to a much lesser extent, ammonia-lyase activity. Primarily, catalyzes the rearrangement of L-tyrosine to S-beta-tyrosine, which is probably incorporated into secondary metabolite myxovalargin. The aminomutase activity exclusively produces S-beta-tyrosine.</text>
</comment>
<comment type="catalytic activity">
    <reaction evidence="4">
        <text>L-tyrosine = 3-amino-3-(4-hydroxyphenyl)propanoate</text>
        <dbReference type="Rhea" id="RHEA:15781"/>
        <dbReference type="ChEBI" id="CHEBI:57956"/>
        <dbReference type="ChEBI" id="CHEBI:58315"/>
        <dbReference type="EC" id="5.4.3.6"/>
    </reaction>
</comment>
<comment type="catalytic activity">
    <reaction evidence="4">
        <text>L-tyrosine = (E)-4-coumarate + NH4(+)</text>
        <dbReference type="Rhea" id="RHEA:24906"/>
        <dbReference type="ChEBI" id="CHEBI:12876"/>
        <dbReference type="ChEBI" id="CHEBI:28938"/>
        <dbReference type="ChEBI" id="CHEBI:58315"/>
        <dbReference type="EC" id="4.3.1.23"/>
    </reaction>
</comment>
<comment type="subunit">
    <text evidence="1">Homotetramer; dimer of dimers.</text>
</comment>
<comment type="PTM">
    <text evidence="2">Contains an active site 4-methylidene-imidazol-5-one (MIO), which is formed autocatalytically by cyclization and dehydration of residues Ala-Ser-Gly.</text>
</comment>
<comment type="similarity">
    <text evidence="4">Belongs to the TAL/TAM family.</text>
</comment>
<sequence length="526" mass="56946">MDIYAVAVGRVGVELDAAQLERVRATHLRVQGWGMEKYPMYGVNTGFGELINVIIPPQFKSDLQHNLLRSHAAGGGEPFPDEVVRAIMTVRINCLMKGYSGISPEALQLLATMLNRGIHPVIPMQGSLGASGDLAPLSHMALPLIGDGHVRKNGVTRPTMEVFQEEGLTPLKLGFKEGLALVNGTSAMTGAASLALYRARHLLRLSLLASADIVQAMNASTRPFSHTGNAVKNHPGQVVIARLMRDLTEGTGLMRDHQDIMRAISERTSHSNDVEETEIYLQNAYSLRCMPQVLGVVLETLQMCQRFIEEEANSVNDNPVILDTPAETYHGANFHGQYVAMACDYLSIAVAEMGVLAERQLNRLLDPHINKPLPGFLAHAKTGLFCGFEGGQYLATSIASENLDLAAPSSIKSIPSNGQNQDIVSMGLIAARKTLALCENVGTILSVLMAALNQASHFTEAAKYSAPIRSIHEKLGKVAPRYEDERPMSTVIAQVRGVLLQEQGLALAQSLVNLDLTPDLSLEPRA</sequence>
<evidence type="ECO:0000250" key="1"/>
<evidence type="ECO:0000250" key="2">
    <source>
        <dbReference type="UniProtKB" id="P21310"/>
    </source>
</evidence>
<evidence type="ECO:0000255" key="3">
    <source>
        <dbReference type="PROSITE-ProRule" id="PRU10122"/>
    </source>
</evidence>
<evidence type="ECO:0000269" key="4">
    <source>
    </source>
</evidence>
<evidence type="ECO:0000303" key="5">
    <source>
    </source>
</evidence>
<evidence type="ECO:0000305" key="6"/>
<evidence type="ECO:0000312" key="7">
    <source>
        <dbReference type="EMBL" id="CAR79034.1"/>
    </source>
</evidence>
<reference evidence="6 7" key="1">
    <citation type="journal article" date="2009" name="ChemBioChem">
        <title>Discovery of additional members of the tyrosine aminomutase enzyme family and the mutational analysis of CmdF.</title>
        <authorList>
            <person name="Krug D."/>
            <person name="Muller R."/>
        </authorList>
    </citation>
    <scope>NUCLEOTIDE SEQUENCE [GENOMIC DNA]</scope>
    <scope>FUNCTION</scope>
    <scope>CATALYTIC ACTIVITY</scope>
</reference>
<keyword id="KW-0413">Isomerase</keyword>
<keyword id="KW-0456">Lyase</keyword>
<dbReference type="EC" id="5.4.3.6"/>
<dbReference type="EC" id="4.3.1.23"/>
<dbReference type="EMBL" id="FM212244">
    <property type="protein sequence ID" value="CAR79034.1"/>
    <property type="molecule type" value="Genomic_DNA"/>
</dbReference>
<dbReference type="SMR" id="B8ZV94"/>
<dbReference type="BRENDA" id="5.4.3.6">
    <property type="organism ID" value="11881"/>
</dbReference>
<dbReference type="GO" id="GO:0016841">
    <property type="term" value="F:ammonia-lyase activity"/>
    <property type="evidence" value="ECO:0000314"/>
    <property type="project" value="UniProtKB"/>
</dbReference>
<dbReference type="GO" id="GO:0050368">
    <property type="term" value="F:L-tyrosine 2,3-aminomutase activity"/>
    <property type="evidence" value="ECO:0000314"/>
    <property type="project" value="UniProtKB"/>
</dbReference>
<dbReference type="GO" id="GO:0052883">
    <property type="term" value="F:tyrosine ammonia-lyase activity"/>
    <property type="evidence" value="ECO:0007669"/>
    <property type="project" value="UniProtKB-EC"/>
</dbReference>
<dbReference type="GO" id="GO:0009403">
    <property type="term" value="P:toxin biosynthetic process"/>
    <property type="evidence" value="ECO:0000314"/>
    <property type="project" value="UniProtKB"/>
</dbReference>
<dbReference type="CDD" id="cd00332">
    <property type="entry name" value="PAL-HAL"/>
    <property type="match status" value="1"/>
</dbReference>
<dbReference type="FunFam" id="1.10.275.10:FF:000005">
    <property type="entry name" value="Histidine ammonia-lyase"/>
    <property type="match status" value="1"/>
</dbReference>
<dbReference type="FunFam" id="1.20.200.10:FF:000012">
    <property type="entry name" value="Tyrosine ammonia-lyase"/>
    <property type="match status" value="1"/>
</dbReference>
<dbReference type="Gene3D" id="1.20.200.10">
    <property type="entry name" value="Fumarase/aspartase (Central domain)"/>
    <property type="match status" value="1"/>
</dbReference>
<dbReference type="Gene3D" id="1.10.275.10">
    <property type="entry name" value="Fumarase/aspartase (N-terminal domain)"/>
    <property type="match status" value="1"/>
</dbReference>
<dbReference type="InterPro" id="IPR001106">
    <property type="entry name" value="Aromatic_Lyase"/>
</dbReference>
<dbReference type="InterPro" id="IPR024083">
    <property type="entry name" value="Fumarase/histidase_N"/>
</dbReference>
<dbReference type="InterPro" id="IPR008948">
    <property type="entry name" value="L-Aspartase-like"/>
</dbReference>
<dbReference type="InterPro" id="IPR022313">
    <property type="entry name" value="Phe/His_NH3-lyase_AS"/>
</dbReference>
<dbReference type="PANTHER" id="PTHR10362">
    <property type="entry name" value="HISTIDINE AMMONIA-LYASE"/>
    <property type="match status" value="1"/>
</dbReference>
<dbReference type="Pfam" id="PF00221">
    <property type="entry name" value="Lyase_aromatic"/>
    <property type="match status" value="1"/>
</dbReference>
<dbReference type="SUPFAM" id="SSF48557">
    <property type="entry name" value="L-aspartase-like"/>
    <property type="match status" value="1"/>
</dbReference>
<dbReference type="PROSITE" id="PS00488">
    <property type="entry name" value="PAL_HISTIDASE"/>
    <property type="match status" value="1"/>
</dbReference>
<proteinExistence type="evidence at protein level"/>
<protein>
    <recommendedName>
        <fullName evidence="5">Tyrosine 2,3-aminomutase</fullName>
        <shortName evidence="5">MxTAM</shortName>
        <ecNumber>5.4.3.6</ecNumber>
    </recommendedName>
    <alternativeName>
        <fullName evidence="5">Tyrosine ammonia-lyase</fullName>
        <ecNumber>4.3.1.23</ecNumber>
    </alternativeName>
</protein>
<organism>
    <name type="scientific">Myxococcus sp. (strain Mx-B0)</name>
    <dbReference type="NCBI Taxonomy" id="563923"/>
    <lineage>
        <taxon>Bacteria</taxon>
        <taxon>Pseudomonadati</taxon>
        <taxon>Myxococcota</taxon>
        <taxon>Myxococcia</taxon>
        <taxon>Myxococcales</taxon>
        <taxon>Cystobacterineae</taxon>
        <taxon>Myxococcaceae</taxon>
        <taxon>Myxococcus</taxon>
    </lineage>
</organism>
<feature type="chain" id="PRO_0000407377" description="Tyrosine 2,3-aminomutase">
    <location>
        <begin position="1"/>
        <end position="526"/>
    </location>
</feature>
<feature type="active site" description="Proton donor/acceptor" evidence="1">
    <location>
        <position position="41"/>
    </location>
</feature>
<feature type="binding site" evidence="1">
    <location>
        <position position="71"/>
    </location>
    <ligand>
        <name>substrate</name>
    </ligand>
</feature>
<feature type="binding site" evidence="1">
    <location>
        <position position="183"/>
    </location>
    <ligand>
        <name>substrate</name>
    </ligand>
</feature>
<feature type="binding site" evidence="1">
    <location>
        <position position="288"/>
    </location>
    <ligand>
        <name>substrate</name>
    </ligand>
</feature>
<feature type="modified residue" description="2,3-didehydroalanine (Ser)" evidence="2 3">
    <location>
        <position position="131"/>
    </location>
</feature>
<feature type="cross-link" description="5-imidazolinone (Ala-Gly)" evidence="2">
    <location>
        <begin position="130"/>
        <end position="132"/>
    </location>
</feature>
<gene>
    <name evidence="7" type="primary">tam</name>
</gene>
<name>TAM_MYXSM</name>
<accession>B8ZV94</accession>